<name>AROC_FRATF</name>
<evidence type="ECO:0000255" key="1">
    <source>
        <dbReference type="HAMAP-Rule" id="MF_00300"/>
    </source>
</evidence>
<sequence>MSGNTFGKIFTVTTCGESHGDSLAAIIDGCPSNIPLCEAYIQLELDRRKPGQSKFTTQRKEPDEVKIISGVFEGKTTGTPIGLIIKNQDQKSKDYSEIKDKFRPGHADYTYFKKYGIRDYRGGGRSSARETAMRVAAGAIAKKILKHYGIEIYGFCSQIGSLKIDFIDKDFINQNPFFIANKNAVPACEDLIHSIRKQGDSIGAEVTVVATGLEAGLGRPVFDRLDASIAYAMMSINAVKAVSIGDGFDCVAQKGSQHRDEITQQQGFLSNHAGGILGGISTGQDIIAKLAFKPTSSILQPGKSIDVQGNDTTVITKGRHDPCVGIRGVPIAEAMLALVLVDELLITRSYRD</sequence>
<organism>
    <name type="scientific">Francisella tularensis subsp. holarctica (strain FTNF002-00 / FTA)</name>
    <dbReference type="NCBI Taxonomy" id="458234"/>
    <lineage>
        <taxon>Bacteria</taxon>
        <taxon>Pseudomonadati</taxon>
        <taxon>Pseudomonadota</taxon>
        <taxon>Gammaproteobacteria</taxon>
        <taxon>Thiotrichales</taxon>
        <taxon>Francisellaceae</taxon>
        <taxon>Francisella</taxon>
    </lineage>
</organism>
<gene>
    <name evidence="1" type="primary">aroC</name>
    <name type="ordered locus">FTA_0400</name>
</gene>
<keyword id="KW-0028">Amino-acid biosynthesis</keyword>
<keyword id="KW-0057">Aromatic amino acid biosynthesis</keyword>
<keyword id="KW-0274">FAD</keyword>
<keyword id="KW-0285">Flavoprotein</keyword>
<keyword id="KW-0288">FMN</keyword>
<keyword id="KW-0456">Lyase</keyword>
<keyword id="KW-0521">NADP</keyword>
<reference key="1">
    <citation type="journal article" date="2009" name="PLoS ONE">
        <title>Complete genome sequence of Francisella tularensis subspecies holarctica FTNF002-00.</title>
        <authorList>
            <person name="Barabote R.D."/>
            <person name="Xie G."/>
            <person name="Brettin T.S."/>
            <person name="Hinrichs S.H."/>
            <person name="Fey P.D."/>
            <person name="Jay J.J."/>
            <person name="Engle J.L."/>
            <person name="Godbole S.D."/>
            <person name="Noronha J.M."/>
            <person name="Scheuermann R.H."/>
            <person name="Zhou L.W."/>
            <person name="Lion C."/>
            <person name="Dempsey M.P."/>
        </authorList>
    </citation>
    <scope>NUCLEOTIDE SEQUENCE [LARGE SCALE GENOMIC DNA]</scope>
    <source>
        <strain>FTNF002-00 / FTA</strain>
    </source>
</reference>
<comment type="function">
    <text evidence="1">Catalyzes the anti-1,4-elimination of the C-3 phosphate and the C-6 proR hydrogen from 5-enolpyruvylshikimate-3-phosphate (EPSP) to yield chorismate, which is the branch point compound that serves as the starting substrate for the three terminal pathways of aromatic amino acid biosynthesis. This reaction introduces a second double bond into the aromatic ring system.</text>
</comment>
<comment type="catalytic activity">
    <reaction evidence="1">
        <text>5-O-(1-carboxyvinyl)-3-phosphoshikimate = chorismate + phosphate</text>
        <dbReference type="Rhea" id="RHEA:21020"/>
        <dbReference type="ChEBI" id="CHEBI:29748"/>
        <dbReference type="ChEBI" id="CHEBI:43474"/>
        <dbReference type="ChEBI" id="CHEBI:57701"/>
        <dbReference type="EC" id="4.2.3.5"/>
    </reaction>
</comment>
<comment type="cofactor">
    <cofactor evidence="1">
        <name>FMNH2</name>
        <dbReference type="ChEBI" id="CHEBI:57618"/>
    </cofactor>
    <text evidence="1">Reduced FMN (FMNH(2)).</text>
</comment>
<comment type="pathway">
    <text evidence="1">Metabolic intermediate biosynthesis; chorismate biosynthesis; chorismate from D-erythrose 4-phosphate and phosphoenolpyruvate: step 7/7.</text>
</comment>
<comment type="subunit">
    <text evidence="1">Homotetramer.</text>
</comment>
<comment type="similarity">
    <text evidence="1">Belongs to the chorismate synthase family.</text>
</comment>
<feature type="chain" id="PRO_1000022489" description="Chorismate synthase">
    <location>
        <begin position="1"/>
        <end position="352"/>
    </location>
</feature>
<feature type="binding site" evidence="1">
    <location>
        <position position="48"/>
    </location>
    <ligand>
        <name>NADP(+)</name>
        <dbReference type="ChEBI" id="CHEBI:58349"/>
    </ligand>
</feature>
<feature type="binding site" evidence="1">
    <location>
        <begin position="125"/>
        <end position="127"/>
    </location>
    <ligand>
        <name>FMN</name>
        <dbReference type="ChEBI" id="CHEBI:58210"/>
    </ligand>
</feature>
<feature type="binding site" evidence="1">
    <location>
        <begin position="237"/>
        <end position="238"/>
    </location>
    <ligand>
        <name>FMN</name>
        <dbReference type="ChEBI" id="CHEBI:58210"/>
    </ligand>
</feature>
<feature type="binding site" evidence="1">
    <location>
        <position position="278"/>
    </location>
    <ligand>
        <name>FMN</name>
        <dbReference type="ChEBI" id="CHEBI:58210"/>
    </ligand>
</feature>
<feature type="binding site" evidence="1">
    <location>
        <begin position="293"/>
        <end position="297"/>
    </location>
    <ligand>
        <name>FMN</name>
        <dbReference type="ChEBI" id="CHEBI:58210"/>
    </ligand>
</feature>
<feature type="binding site" evidence="1">
    <location>
        <position position="319"/>
    </location>
    <ligand>
        <name>FMN</name>
        <dbReference type="ChEBI" id="CHEBI:58210"/>
    </ligand>
</feature>
<proteinExistence type="inferred from homology"/>
<dbReference type="EC" id="4.2.3.5" evidence="1"/>
<dbReference type="EMBL" id="CP000803">
    <property type="protein sequence ID" value="ABU60877.1"/>
    <property type="molecule type" value="Genomic_DNA"/>
</dbReference>
<dbReference type="RefSeq" id="WP_003014579.1">
    <property type="nucleotide sequence ID" value="NC_009749.1"/>
</dbReference>
<dbReference type="SMR" id="A7NA74"/>
<dbReference type="KEGG" id="fta:FTA_0400"/>
<dbReference type="HOGENOM" id="CLU_034547_0_2_6"/>
<dbReference type="UniPathway" id="UPA00053">
    <property type="reaction ID" value="UER00090"/>
</dbReference>
<dbReference type="GO" id="GO:0005829">
    <property type="term" value="C:cytosol"/>
    <property type="evidence" value="ECO:0007669"/>
    <property type="project" value="TreeGrafter"/>
</dbReference>
<dbReference type="GO" id="GO:0004107">
    <property type="term" value="F:chorismate synthase activity"/>
    <property type="evidence" value="ECO:0007669"/>
    <property type="project" value="UniProtKB-UniRule"/>
</dbReference>
<dbReference type="GO" id="GO:0010181">
    <property type="term" value="F:FMN binding"/>
    <property type="evidence" value="ECO:0007669"/>
    <property type="project" value="TreeGrafter"/>
</dbReference>
<dbReference type="GO" id="GO:0008652">
    <property type="term" value="P:amino acid biosynthetic process"/>
    <property type="evidence" value="ECO:0007669"/>
    <property type="project" value="UniProtKB-KW"/>
</dbReference>
<dbReference type="GO" id="GO:0009073">
    <property type="term" value="P:aromatic amino acid family biosynthetic process"/>
    <property type="evidence" value="ECO:0007669"/>
    <property type="project" value="UniProtKB-KW"/>
</dbReference>
<dbReference type="GO" id="GO:0009423">
    <property type="term" value="P:chorismate biosynthetic process"/>
    <property type="evidence" value="ECO:0007669"/>
    <property type="project" value="UniProtKB-UniRule"/>
</dbReference>
<dbReference type="CDD" id="cd07304">
    <property type="entry name" value="Chorismate_synthase"/>
    <property type="match status" value="1"/>
</dbReference>
<dbReference type="Gene3D" id="3.60.150.10">
    <property type="entry name" value="Chorismate synthase AroC"/>
    <property type="match status" value="1"/>
</dbReference>
<dbReference type="HAMAP" id="MF_00300">
    <property type="entry name" value="Chorismate_synth"/>
    <property type="match status" value="1"/>
</dbReference>
<dbReference type="InterPro" id="IPR000453">
    <property type="entry name" value="Chorismate_synth"/>
</dbReference>
<dbReference type="InterPro" id="IPR035904">
    <property type="entry name" value="Chorismate_synth_AroC_sf"/>
</dbReference>
<dbReference type="InterPro" id="IPR020541">
    <property type="entry name" value="Chorismate_synthase_CS"/>
</dbReference>
<dbReference type="NCBIfam" id="TIGR00033">
    <property type="entry name" value="aroC"/>
    <property type="match status" value="1"/>
</dbReference>
<dbReference type="NCBIfam" id="NF003793">
    <property type="entry name" value="PRK05382.1"/>
    <property type="match status" value="1"/>
</dbReference>
<dbReference type="PANTHER" id="PTHR21085">
    <property type="entry name" value="CHORISMATE SYNTHASE"/>
    <property type="match status" value="1"/>
</dbReference>
<dbReference type="PANTHER" id="PTHR21085:SF0">
    <property type="entry name" value="CHORISMATE SYNTHASE"/>
    <property type="match status" value="1"/>
</dbReference>
<dbReference type="Pfam" id="PF01264">
    <property type="entry name" value="Chorismate_synt"/>
    <property type="match status" value="1"/>
</dbReference>
<dbReference type="PIRSF" id="PIRSF001456">
    <property type="entry name" value="Chorismate_synth"/>
    <property type="match status" value="1"/>
</dbReference>
<dbReference type="SUPFAM" id="SSF103263">
    <property type="entry name" value="Chorismate synthase, AroC"/>
    <property type="match status" value="1"/>
</dbReference>
<dbReference type="PROSITE" id="PS00787">
    <property type="entry name" value="CHORISMATE_SYNTHASE_1"/>
    <property type="match status" value="1"/>
</dbReference>
<dbReference type="PROSITE" id="PS00788">
    <property type="entry name" value="CHORISMATE_SYNTHASE_2"/>
    <property type="match status" value="1"/>
</dbReference>
<dbReference type="PROSITE" id="PS00789">
    <property type="entry name" value="CHORISMATE_SYNTHASE_3"/>
    <property type="match status" value="1"/>
</dbReference>
<protein>
    <recommendedName>
        <fullName evidence="1">Chorismate synthase</fullName>
        <shortName evidence="1">CS</shortName>
        <ecNumber evidence="1">4.2.3.5</ecNumber>
    </recommendedName>
    <alternativeName>
        <fullName evidence="1">5-enolpyruvylshikimate-3-phosphate phospholyase</fullName>
    </alternativeName>
</protein>
<accession>A7NA74</accession>